<protein>
    <recommendedName>
        <fullName>Pneumococcal vaccine antigen A homolog</fullName>
    </recommendedName>
</protein>
<feature type="chain" id="PRO_0000411433" description="Pneumococcal vaccine antigen A homolog">
    <location>
        <begin position="1"/>
        <end position="199"/>
    </location>
</feature>
<comment type="subcellular location">
    <subcellularLocation>
        <location evidence="1">Cell surface</location>
    </subcellularLocation>
</comment>
<accession>P0DC91</accession>
<accession>Q8K7H6</accession>
<evidence type="ECO:0000250" key="1"/>
<name>PVAA_STRPQ</name>
<gene>
    <name type="primary">pvaA</name>
    <name type="ordered locus">SPs1004</name>
</gene>
<proteinExistence type="inferred from homology"/>
<reference key="1">
    <citation type="journal article" date="2003" name="Genome Res.">
        <title>Genome sequence of an M3 strain of Streptococcus pyogenes reveals a large-scale genomic rearrangement in invasive strains and new insights into phage evolution.</title>
        <authorList>
            <person name="Nakagawa I."/>
            <person name="Kurokawa K."/>
            <person name="Yamashita A."/>
            <person name="Nakata M."/>
            <person name="Tomiyasu Y."/>
            <person name="Okahashi N."/>
            <person name="Kawabata S."/>
            <person name="Yamazaki K."/>
            <person name="Shiba T."/>
            <person name="Yasunaga T."/>
            <person name="Hayashi H."/>
            <person name="Hattori M."/>
            <person name="Hamada S."/>
        </authorList>
    </citation>
    <scope>NUCLEOTIDE SEQUENCE [LARGE SCALE GENOMIC DNA]</scope>
    <source>
        <strain>SSI-1</strain>
    </source>
</reference>
<organism>
    <name type="scientific">Streptococcus pyogenes serotype M3 (strain SSI-1)</name>
    <dbReference type="NCBI Taxonomy" id="193567"/>
    <lineage>
        <taxon>Bacteria</taxon>
        <taxon>Bacillati</taxon>
        <taxon>Bacillota</taxon>
        <taxon>Bacilli</taxon>
        <taxon>Lactobacillales</taxon>
        <taxon>Streptococcaceae</taxon>
        <taxon>Streptococcus</taxon>
    </lineage>
</organism>
<dbReference type="EMBL" id="BA000034">
    <property type="protein sequence ID" value="BAC64099.1"/>
    <property type="molecule type" value="Genomic_DNA"/>
</dbReference>
<dbReference type="RefSeq" id="WP_011054492.1">
    <property type="nucleotide sequence ID" value="NC_004606.1"/>
</dbReference>
<dbReference type="SMR" id="P0DC91"/>
<dbReference type="CAZy" id="GH23">
    <property type="family name" value="Glycoside Hydrolase Family 23"/>
</dbReference>
<dbReference type="KEGG" id="sps:SPs1004"/>
<dbReference type="HOGENOM" id="CLU_101375_3_0_9"/>
<dbReference type="GO" id="GO:0009986">
    <property type="term" value="C:cell surface"/>
    <property type="evidence" value="ECO:0007669"/>
    <property type="project" value="UniProtKB-SubCell"/>
</dbReference>
<dbReference type="CDD" id="cd16891">
    <property type="entry name" value="CwlT-like"/>
    <property type="match status" value="1"/>
</dbReference>
<dbReference type="Gene3D" id="1.10.530.10">
    <property type="match status" value="1"/>
</dbReference>
<dbReference type="InterPro" id="IPR047194">
    <property type="entry name" value="CwlT-like_lysozyme"/>
</dbReference>
<dbReference type="InterPro" id="IPR023346">
    <property type="entry name" value="Lysozyme-like_dom_sf"/>
</dbReference>
<dbReference type="Pfam" id="PF13702">
    <property type="entry name" value="Lysozyme_like"/>
    <property type="match status" value="1"/>
</dbReference>
<dbReference type="SUPFAM" id="SSF53955">
    <property type="entry name" value="Lysozyme-like"/>
    <property type="match status" value="1"/>
</dbReference>
<sequence>MFRLLKRACSFLLLFVIYQSFVIHHNVQRVLAYKPMVEKTLAENDTKANVDLVLAMIYTETKGGEADVMQSSESSSGQKNSITDSQASIEHGVNLLSHNLALAEEAGVDSWTAVQAYNFGTAYIDYIAKHGSQNTVDLATTYSKTVVAPSLGNTSGQTYFYYHPLALISGGKLYKNGGNIYYSREVHFNLYLIELMSLF</sequence>